<dbReference type="EC" id="3.3.2.10"/>
<dbReference type="EC" id="3.3.2.11"/>
<dbReference type="EMBL" id="AL123456">
    <property type="protein sequence ID" value="CCP45539.1"/>
    <property type="molecule type" value="Genomic_DNA"/>
</dbReference>
<dbReference type="PIR" id="C70878">
    <property type="entry name" value="C70878"/>
</dbReference>
<dbReference type="RefSeq" id="NP_217256.1">
    <property type="nucleotide sequence ID" value="NC_000962.3"/>
</dbReference>
<dbReference type="RefSeq" id="WP_003414015.1">
    <property type="nucleotide sequence ID" value="NZ_NVQJ01000017.1"/>
</dbReference>
<dbReference type="PDB" id="2BNG">
    <property type="method" value="X-ray"/>
    <property type="resolution" value="2.50 A"/>
    <property type="chains" value="A/B/C=1-149"/>
</dbReference>
<dbReference type="PDBsum" id="2BNG"/>
<dbReference type="SMR" id="O33283"/>
<dbReference type="STRING" id="83332.Rv2740"/>
<dbReference type="PaxDb" id="83332-Rv2740"/>
<dbReference type="DNASU" id="888365"/>
<dbReference type="GeneID" id="888365"/>
<dbReference type="KEGG" id="mtu:Rv2740"/>
<dbReference type="KEGG" id="mtv:RVBD_2740"/>
<dbReference type="TubercuList" id="Rv2740"/>
<dbReference type="eggNOG" id="COG4308">
    <property type="taxonomic scope" value="Bacteria"/>
</dbReference>
<dbReference type="InParanoid" id="O33283"/>
<dbReference type="OrthoDB" id="4762083at2"/>
<dbReference type="SABIO-RK" id="O33283"/>
<dbReference type="EvolutionaryTrace" id="O33283"/>
<dbReference type="Proteomes" id="UP000001584">
    <property type="component" value="Chromosome"/>
</dbReference>
<dbReference type="GO" id="GO:0005886">
    <property type="term" value="C:plasma membrane"/>
    <property type="evidence" value="ECO:0007005"/>
    <property type="project" value="MTBBASE"/>
</dbReference>
<dbReference type="GO" id="GO:0033963">
    <property type="term" value="F:cholesterol-5,6-oxide hydrolase activity"/>
    <property type="evidence" value="ECO:0000314"/>
    <property type="project" value="MTBBASE"/>
</dbReference>
<dbReference type="GO" id="GO:0004301">
    <property type="term" value="F:epoxide hydrolase activity"/>
    <property type="evidence" value="ECO:0000314"/>
    <property type="project" value="MTBBASE"/>
</dbReference>
<dbReference type="GO" id="GO:0097176">
    <property type="term" value="P:epoxide metabolic process"/>
    <property type="evidence" value="ECO:0000314"/>
    <property type="project" value="MTBBASE"/>
</dbReference>
<dbReference type="FunFam" id="3.10.450.50:FF:000021">
    <property type="entry name" value="Epoxide hydrolase EphG"/>
    <property type="match status" value="1"/>
</dbReference>
<dbReference type="Gene3D" id="3.10.450.50">
    <property type="match status" value="1"/>
</dbReference>
<dbReference type="InterPro" id="IPR013100">
    <property type="entry name" value="LEH"/>
</dbReference>
<dbReference type="InterPro" id="IPR032710">
    <property type="entry name" value="NTF2-like_dom_sf"/>
</dbReference>
<dbReference type="Pfam" id="PF07858">
    <property type="entry name" value="LEH"/>
    <property type="match status" value="1"/>
</dbReference>
<dbReference type="SUPFAM" id="SSF54427">
    <property type="entry name" value="NTF2-like"/>
    <property type="match status" value="1"/>
</dbReference>
<proteinExistence type="evidence at protein level"/>
<comment type="function">
    <text evidence="1">Epoxide hydrolase capable of hydrolyzing long or bulky lipophilic epoxides such as 9,10-epoxystearic acid and cholesterol 5,6-oxide in vitro. The physiological substrates have yet to be identified, but could be fatty acid or steroid derivatives.</text>
</comment>
<comment type="catalytic activity">
    <reaction evidence="1">
        <text>an epoxide + H2O = an ethanediol</text>
        <dbReference type="Rhea" id="RHEA:19037"/>
        <dbReference type="ChEBI" id="CHEBI:15377"/>
        <dbReference type="ChEBI" id="CHEBI:32955"/>
        <dbReference type="ChEBI" id="CHEBI:140594"/>
        <dbReference type="EC" id="3.3.2.10"/>
    </reaction>
</comment>
<comment type="catalytic activity">
    <reaction evidence="1">
        <text>5,6alpha-epoxy-5alpha-cholestan-3beta-ol + H2O = 5alpha-cholestane-3beta,5,6beta-triol</text>
        <dbReference type="Rhea" id="RHEA:11964"/>
        <dbReference type="ChEBI" id="CHEBI:15377"/>
        <dbReference type="ChEBI" id="CHEBI:28082"/>
        <dbReference type="ChEBI" id="CHEBI:49305"/>
        <dbReference type="EC" id="3.3.2.11"/>
    </reaction>
</comment>
<comment type="catalytic activity">
    <reaction evidence="1">
        <text>5,6beta-epoxy-5beta-cholestan-3beta-ol + H2O = 5alpha-cholestane-3beta,5,6beta-triol</text>
        <dbReference type="Rhea" id="RHEA:15113"/>
        <dbReference type="ChEBI" id="CHEBI:15377"/>
        <dbReference type="ChEBI" id="CHEBI:28082"/>
        <dbReference type="ChEBI" id="CHEBI:28164"/>
        <dbReference type="EC" id="3.3.2.11"/>
    </reaction>
</comment>
<comment type="activity regulation">
    <text evidence="1">Is inhibited by the anti-epileptic drug valpromide (Ki value of about 100 uM).</text>
</comment>
<comment type="biophysicochemical properties">
    <kinetics>
        <KM evidence="1">45 uM for cis-9,10-epoxystearate</KM>
        <KM evidence="1">60 uM for cholesterol 5,6-oxide</KM>
        <Vmax evidence="1">30.0 nmol/min/mg enzyme with cis-9,10-epoxystearate as substrate</Vmax>
        <Vmax evidence="1">1.1 nmol/min/mg enzyme with cholesterol 5,6-oxide as substrate</Vmax>
    </kinetics>
</comment>
<comment type="subunit">
    <text evidence="1">Homodimer. Is also present as monomer in solution.</text>
</comment>
<comment type="similarity">
    <text evidence="2">Belongs to the limonene-1,2-epoxide hydrolase family.</text>
</comment>
<gene>
    <name type="primary">ephG</name>
    <name type="ordered locus">Rv2740</name>
</gene>
<organism>
    <name type="scientific">Mycobacterium tuberculosis (strain ATCC 25618 / H37Rv)</name>
    <dbReference type="NCBI Taxonomy" id="83332"/>
    <lineage>
        <taxon>Bacteria</taxon>
        <taxon>Bacillati</taxon>
        <taxon>Actinomycetota</taxon>
        <taxon>Actinomycetes</taxon>
        <taxon>Mycobacteriales</taxon>
        <taxon>Mycobacteriaceae</taxon>
        <taxon>Mycobacterium</taxon>
        <taxon>Mycobacterium tuberculosis complex</taxon>
    </lineage>
</organism>
<accession>O33283</accession>
<accession>F2GPI3</accession>
<accession>L0TC43</accession>
<reference key="1">
    <citation type="journal article" date="1998" name="Nature">
        <title>Deciphering the biology of Mycobacterium tuberculosis from the complete genome sequence.</title>
        <authorList>
            <person name="Cole S.T."/>
            <person name="Brosch R."/>
            <person name="Parkhill J."/>
            <person name="Garnier T."/>
            <person name="Churcher C.M."/>
            <person name="Harris D.E."/>
            <person name="Gordon S.V."/>
            <person name="Eiglmeier K."/>
            <person name="Gas S."/>
            <person name="Barry C.E. III"/>
            <person name="Tekaia F."/>
            <person name="Badcock K."/>
            <person name="Basham D."/>
            <person name="Brown D."/>
            <person name="Chillingworth T."/>
            <person name="Connor R."/>
            <person name="Davies R.M."/>
            <person name="Devlin K."/>
            <person name="Feltwell T."/>
            <person name="Gentles S."/>
            <person name="Hamlin N."/>
            <person name="Holroyd S."/>
            <person name="Hornsby T."/>
            <person name="Jagels K."/>
            <person name="Krogh A."/>
            <person name="McLean J."/>
            <person name="Moule S."/>
            <person name="Murphy L.D."/>
            <person name="Oliver S."/>
            <person name="Osborne J."/>
            <person name="Quail M.A."/>
            <person name="Rajandream M.A."/>
            <person name="Rogers J."/>
            <person name="Rutter S."/>
            <person name="Seeger K."/>
            <person name="Skelton S."/>
            <person name="Squares S."/>
            <person name="Squares R."/>
            <person name="Sulston J.E."/>
            <person name="Taylor K."/>
            <person name="Whitehead S."/>
            <person name="Barrell B.G."/>
        </authorList>
    </citation>
    <scope>NUCLEOTIDE SEQUENCE [LARGE SCALE GENOMIC DNA]</scope>
    <source>
        <strain>ATCC 25618 / H37Rv</strain>
    </source>
</reference>
<reference key="2">
    <citation type="journal article" date="2011" name="Mol. Cell. Proteomics">
        <title>Proteogenomic analysis of Mycobacterium tuberculosis by high resolution mass spectrometry.</title>
        <authorList>
            <person name="Kelkar D.S."/>
            <person name="Kumar D."/>
            <person name="Kumar P."/>
            <person name="Balakrishnan L."/>
            <person name="Muthusamy B."/>
            <person name="Yadav A.K."/>
            <person name="Shrivastava P."/>
            <person name="Marimuthu A."/>
            <person name="Anand S."/>
            <person name="Sundaram H."/>
            <person name="Kingsbury R."/>
            <person name="Harsha H.C."/>
            <person name="Nair B."/>
            <person name="Prasad T.S."/>
            <person name="Chauhan D.S."/>
            <person name="Katoch K."/>
            <person name="Katoch V.M."/>
            <person name="Kumar P."/>
            <person name="Chaerkady R."/>
            <person name="Ramachandran S."/>
            <person name="Dash D."/>
            <person name="Pandey A."/>
        </authorList>
    </citation>
    <scope>IDENTIFICATION BY MASS SPECTROMETRY [LARGE SCALE ANALYSIS]</scope>
    <source>
        <strain>ATCC 25618 / H37Rv</strain>
    </source>
</reference>
<reference key="3">
    <citation type="journal article" date="2005" name="J. Mol. Biol.">
        <title>Structure of an atypical epoxide hydrolase from Mycobacterium tuberculosis gives insights into its function.</title>
        <authorList>
            <person name="Johansson P."/>
            <person name="Unge T."/>
            <person name="Cronin A."/>
            <person name="Arand M."/>
            <person name="Bergfors T."/>
            <person name="Jones T.A."/>
            <person name="Mowbray S.L."/>
        </authorList>
    </citation>
    <scope>X-RAY CRYSTALLOGRAPHY (2.50 ANGSTROMS)</scope>
    <scope>FUNCTION</scope>
    <scope>CATALYTIC ACTIVITY</scope>
    <scope>SUBSTRATE SPECIFICITY</scope>
    <scope>KINETIC PARAMETERS</scope>
    <scope>ACTIVITY REGULATION</scope>
    <scope>REACTION MECHANISM</scope>
    <scope>ACTIVE SITES</scope>
    <scope>SUBUNIT</scope>
    <source>
        <strain>ATCC 25618 / H37Rv</strain>
    </source>
</reference>
<sequence>MAELTETSPETPETTEAIRAVEAFLNALQNEDFDTVDAALGDDLVYENVGFSRIRGGRRTATLLRRMQGRVGFEVKIHRIGADGAAVLTERTDALIIGPLRVQFWVCGVFEVDDGRITLWRDYFDVYDMFKGLLRGLVALVVPSLKATL</sequence>
<keyword id="KW-0002">3D-structure</keyword>
<keyword id="KW-0378">Hydrolase</keyword>
<keyword id="KW-1185">Reference proteome</keyword>
<feature type="chain" id="PRO_0000420415" description="Epoxide hydrolase EphG">
    <location>
        <begin position="1"/>
        <end position="149"/>
    </location>
</feature>
<feature type="active site" description="Proton donor" evidence="3">
    <location>
        <position position="93"/>
    </location>
</feature>
<feature type="active site" description="Proton acceptor" evidence="3">
    <location>
        <position position="122"/>
    </location>
</feature>
<feature type="helix" evidence="4">
    <location>
        <begin position="14"/>
        <end position="30"/>
    </location>
</feature>
<feature type="helix" evidence="4">
    <location>
        <begin position="33"/>
        <end position="39"/>
    </location>
</feature>
<feature type="strand" evidence="4">
    <location>
        <begin position="40"/>
        <end position="48"/>
    </location>
</feature>
<feature type="turn" evidence="4">
    <location>
        <begin position="49"/>
        <end position="51"/>
    </location>
</feature>
<feature type="strand" evidence="4">
    <location>
        <begin position="52"/>
        <end position="55"/>
    </location>
</feature>
<feature type="helix" evidence="4">
    <location>
        <begin position="57"/>
        <end position="65"/>
    </location>
</feature>
<feature type="turn" evidence="4">
    <location>
        <begin position="66"/>
        <end position="70"/>
    </location>
</feature>
<feature type="strand" evidence="4">
    <location>
        <begin position="72"/>
        <end position="83"/>
    </location>
</feature>
<feature type="strand" evidence="4">
    <location>
        <begin position="86"/>
        <end position="97"/>
    </location>
</feature>
<feature type="strand" evidence="4">
    <location>
        <begin position="100"/>
        <end position="113"/>
    </location>
</feature>
<feature type="strand" evidence="4">
    <location>
        <begin position="116"/>
        <end position="123"/>
    </location>
</feature>
<feature type="helix" evidence="4">
    <location>
        <begin position="126"/>
        <end position="139"/>
    </location>
</feature>
<protein>
    <recommendedName>
        <fullName>Epoxide hydrolase EphG</fullName>
        <shortName>EH</shortName>
        <ecNumber>3.3.2.10</ecNumber>
    </recommendedName>
    <alternativeName>
        <fullName>Cholesterol-5,6-oxide hydrolase</fullName>
        <ecNumber>3.3.2.11</ecNumber>
    </alternativeName>
</protein>
<name>EPHG_MYCTU</name>
<evidence type="ECO:0000269" key="1">
    <source>
    </source>
</evidence>
<evidence type="ECO:0000305" key="2"/>
<evidence type="ECO:0000305" key="3">
    <source>
    </source>
</evidence>
<evidence type="ECO:0007829" key="4">
    <source>
        <dbReference type="PDB" id="2BNG"/>
    </source>
</evidence>